<sequence>MEYDYIIIGAGSAGNVLAARLTEDADVTVLLLEAGGPDYRLDFRTQMPAALAFPLQGKRYNWAYETDPEPHMNNRRMECGRGKGLGGSSLINGMCYIRGNAMDFDHWASLSGLEDWSYLDCLPYFRKAETRDIGPNDFHGGEGPVNVTTPKIGNNPLFHAMVAAGVQAGYPRTDDLNGYQQEGFGPMDRTVTPKGRRASTARGYLDQARPRNNLTIITHALTDRILFEGKRATGVRYLKGDAGTGQTAYARREVLLCGGAIASPQILQRSGIGPAELLQRLDIPLVQALPGVGENLQDHLEMYLQYSCKQPVSLYPALLWFNQPKIGIEWLFNGTGVGASNQFEAGGFIRSRDAFTWPNIQYHFLPVAINYNGSNAVKEHGFQAHVGSMRSPSRGRIQVKSKDPRQHPSILFNYMSSEQDWHEFRDAIRITREIIAQPALDPYRGREISPGANVQNDDELDAFIREHAETAYHPSCSCKMGDDKMAVVDGQGRVHGVQGLRVVDASIMPQIITGNLNATTIMIAEKIADRIRGCQPLAKSNAAYFIAGDTPARTSPVRHSLPVTSYP</sequence>
<feature type="chain" id="PRO_1000062189" description="Oxygen-dependent choline dehydrogenase">
    <location>
        <begin position="1"/>
        <end position="567"/>
    </location>
</feature>
<feature type="active site" description="Proton acceptor" evidence="1">
    <location>
        <position position="473"/>
    </location>
</feature>
<feature type="binding site" evidence="1">
    <location>
        <begin position="4"/>
        <end position="33"/>
    </location>
    <ligand>
        <name>FAD</name>
        <dbReference type="ChEBI" id="CHEBI:57692"/>
    </ligand>
</feature>
<accession>A7FKL6</accession>
<organism>
    <name type="scientific">Yersinia pseudotuberculosis serotype O:1b (strain IP 31758)</name>
    <dbReference type="NCBI Taxonomy" id="349747"/>
    <lineage>
        <taxon>Bacteria</taxon>
        <taxon>Pseudomonadati</taxon>
        <taxon>Pseudomonadota</taxon>
        <taxon>Gammaproteobacteria</taxon>
        <taxon>Enterobacterales</taxon>
        <taxon>Yersiniaceae</taxon>
        <taxon>Yersinia</taxon>
    </lineage>
</organism>
<comment type="function">
    <text evidence="1">Involved in the biosynthesis of the osmoprotectant glycine betaine. Catalyzes the oxidation of choline to betaine aldehyde and betaine aldehyde to glycine betaine at the same rate.</text>
</comment>
<comment type="catalytic activity">
    <reaction evidence="1">
        <text>choline + A = betaine aldehyde + AH2</text>
        <dbReference type="Rhea" id="RHEA:17433"/>
        <dbReference type="ChEBI" id="CHEBI:13193"/>
        <dbReference type="ChEBI" id="CHEBI:15354"/>
        <dbReference type="ChEBI" id="CHEBI:15710"/>
        <dbReference type="ChEBI" id="CHEBI:17499"/>
        <dbReference type="EC" id="1.1.99.1"/>
    </reaction>
</comment>
<comment type="catalytic activity">
    <reaction evidence="1">
        <text>betaine aldehyde + NAD(+) + H2O = glycine betaine + NADH + 2 H(+)</text>
        <dbReference type="Rhea" id="RHEA:15305"/>
        <dbReference type="ChEBI" id="CHEBI:15377"/>
        <dbReference type="ChEBI" id="CHEBI:15378"/>
        <dbReference type="ChEBI" id="CHEBI:15710"/>
        <dbReference type="ChEBI" id="CHEBI:17750"/>
        <dbReference type="ChEBI" id="CHEBI:57540"/>
        <dbReference type="ChEBI" id="CHEBI:57945"/>
        <dbReference type="EC" id="1.2.1.8"/>
    </reaction>
</comment>
<comment type="cofactor">
    <cofactor evidence="1">
        <name>FAD</name>
        <dbReference type="ChEBI" id="CHEBI:57692"/>
    </cofactor>
</comment>
<comment type="pathway">
    <text evidence="1">Amine and polyamine biosynthesis; betaine biosynthesis via choline pathway; betaine aldehyde from choline (cytochrome c reductase route): step 1/1.</text>
</comment>
<comment type="similarity">
    <text evidence="1">Belongs to the GMC oxidoreductase family.</text>
</comment>
<keyword id="KW-0274">FAD</keyword>
<keyword id="KW-0285">Flavoprotein</keyword>
<keyword id="KW-0520">NAD</keyword>
<keyword id="KW-0560">Oxidoreductase</keyword>
<gene>
    <name evidence="1" type="primary">betA</name>
    <name type="ordered locus">YpsIP31758_2831</name>
</gene>
<proteinExistence type="inferred from homology"/>
<protein>
    <recommendedName>
        <fullName evidence="1">Oxygen-dependent choline dehydrogenase</fullName>
        <shortName evidence="1">CDH</shortName>
        <shortName evidence="1">CHD</shortName>
        <ecNumber evidence="1">1.1.99.1</ecNumber>
    </recommendedName>
    <alternativeName>
        <fullName evidence="1">Betaine aldehyde dehydrogenase</fullName>
        <shortName evidence="1">BADH</shortName>
        <ecNumber evidence="1">1.2.1.8</ecNumber>
    </alternativeName>
</protein>
<dbReference type="EC" id="1.1.99.1" evidence="1"/>
<dbReference type="EC" id="1.2.1.8" evidence="1"/>
<dbReference type="EMBL" id="CP000720">
    <property type="protein sequence ID" value="ABS49607.1"/>
    <property type="molecule type" value="Genomic_DNA"/>
</dbReference>
<dbReference type="RefSeq" id="WP_012105474.1">
    <property type="nucleotide sequence ID" value="NC_009708.1"/>
</dbReference>
<dbReference type="SMR" id="A7FKL6"/>
<dbReference type="KEGG" id="ypi:YpsIP31758_2831"/>
<dbReference type="HOGENOM" id="CLU_002865_7_1_6"/>
<dbReference type="UniPathway" id="UPA00529">
    <property type="reaction ID" value="UER00385"/>
</dbReference>
<dbReference type="Proteomes" id="UP000002412">
    <property type="component" value="Chromosome"/>
</dbReference>
<dbReference type="GO" id="GO:0016020">
    <property type="term" value="C:membrane"/>
    <property type="evidence" value="ECO:0007669"/>
    <property type="project" value="TreeGrafter"/>
</dbReference>
<dbReference type="GO" id="GO:0008802">
    <property type="term" value="F:betaine-aldehyde dehydrogenase (NAD+) activity"/>
    <property type="evidence" value="ECO:0007669"/>
    <property type="project" value="UniProtKB-EC"/>
</dbReference>
<dbReference type="GO" id="GO:0008812">
    <property type="term" value="F:choline dehydrogenase activity"/>
    <property type="evidence" value="ECO:0007669"/>
    <property type="project" value="UniProtKB-UniRule"/>
</dbReference>
<dbReference type="GO" id="GO:0050660">
    <property type="term" value="F:flavin adenine dinucleotide binding"/>
    <property type="evidence" value="ECO:0007669"/>
    <property type="project" value="InterPro"/>
</dbReference>
<dbReference type="GO" id="GO:0019285">
    <property type="term" value="P:glycine betaine biosynthetic process from choline"/>
    <property type="evidence" value="ECO:0007669"/>
    <property type="project" value="UniProtKB-UniRule"/>
</dbReference>
<dbReference type="Gene3D" id="3.50.50.60">
    <property type="entry name" value="FAD/NAD(P)-binding domain"/>
    <property type="match status" value="1"/>
</dbReference>
<dbReference type="Gene3D" id="3.30.560.10">
    <property type="entry name" value="Glucose Oxidase, domain 3"/>
    <property type="match status" value="1"/>
</dbReference>
<dbReference type="HAMAP" id="MF_00750">
    <property type="entry name" value="Choline_dehydrogen"/>
    <property type="match status" value="1"/>
</dbReference>
<dbReference type="InterPro" id="IPR011533">
    <property type="entry name" value="BetA"/>
</dbReference>
<dbReference type="InterPro" id="IPR036188">
    <property type="entry name" value="FAD/NAD-bd_sf"/>
</dbReference>
<dbReference type="InterPro" id="IPR012132">
    <property type="entry name" value="GMC_OxRdtase"/>
</dbReference>
<dbReference type="InterPro" id="IPR000172">
    <property type="entry name" value="GMC_OxRdtase_N"/>
</dbReference>
<dbReference type="InterPro" id="IPR007867">
    <property type="entry name" value="GMC_OxRtase_C"/>
</dbReference>
<dbReference type="NCBIfam" id="TIGR01810">
    <property type="entry name" value="betA"/>
    <property type="match status" value="1"/>
</dbReference>
<dbReference type="NCBIfam" id="NF002550">
    <property type="entry name" value="PRK02106.1"/>
    <property type="match status" value="1"/>
</dbReference>
<dbReference type="PANTHER" id="PTHR11552:SF147">
    <property type="entry name" value="CHOLINE DEHYDROGENASE, MITOCHONDRIAL"/>
    <property type="match status" value="1"/>
</dbReference>
<dbReference type="PANTHER" id="PTHR11552">
    <property type="entry name" value="GLUCOSE-METHANOL-CHOLINE GMC OXIDOREDUCTASE"/>
    <property type="match status" value="1"/>
</dbReference>
<dbReference type="Pfam" id="PF05199">
    <property type="entry name" value="GMC_oxred_C"/>
    <property type="match status" value="1"/>
</dbReference>
<dbReference type="Pfam" id="PF00732">
    <property type="entry name" value="GMC_oxred_N"/>
    <property type="match status" value="1"/>
</dbReference>
<dbReference type="PIRSF" id="PIRSF000137">
    <property type="entry name" value="Alcohol_oxidase"/>
    <property type="match status" value="1"/>
</dbReference>
<dbReference type="SUPFAM" id="SSF54373">
    <property type="entry name" value="FAD-linked reductases, C-terminal domain"/>
    <property type="match status" value="1"/>
</dbReference>
<dbReference type="SUPFAM" id="SSF51905">
    <property type="entry name" value="FAD/NAD(P)-binding domain"/>
    <property type="match status" value="1"/>
</dbReference>
<dbReference type="PROSITE" id="PS00623">
    <property type="entry name" value="GMC_OXRED_1"/>
    <property type="match status" value="1"/>
</dbReference>
<dbReference type="PROSITE" id="PS00624">
    <property type="entry name" value="GMC_OXRED_2"/>
    <property type="match status" value="1"/>
</dbReference>
<name>BETA_YERP3</name>
<reference key="1">
    <citation type="journal article" date="2007" name="PLoS Genet.">
        <title>The complete genome sequence of Yersinia pseudotuberculosis IP31758, the causative agent of Far East scarlet-like fever.</title>
        <authorList>
            <person name="Eppinger M."/>
            <person name="Rosovitz M.J."/>
            <person name="Fricke W.F."/>
            <person name="Rasko D.A."/>
            <person name="Kokorina G."/>
            <person name="Fayolle C."/>
            <person name="Lindler L.E."/>
            <person name="Carniel E."/>
            <person name="Ravel J."/>
        </authorList>
    </citation>
    <scope>NUCLEOTIDE SEQUENCE [LARGE SCALE GENOMIC DNA]</scope>
    <source>
        <strain>IP 31758</strain>
    </source>
</reference>
<evidence type="ECO:0000255" key="1">
    <source>
        <dbReference type="HAMAP-Rule" id="MF_00750"/>
    </source>
</evidence>